<protein>
    <recommendedName>
        <fullName>Glucan 1,4-alpha-maltotetraohydrolase</fullName>
        <shortName>G4-amylase</shortName>
        <ecNumber evidence="4 5 7">3.2.1.60</ecNumber>
    </recommendedName>
    <alternativeName>
        <fullName>Exo-maltotetraohydrolase</fullName>
    </alternativeName>
    <alternativeName>
        <fullName>Maltotetraose-forming amylase</fullName>
    </alternativeName>
    <alternativeName>
        <fullName>Maltotetraose-forming exo-amylase</fullName>
    </alternativeName>
</protein>
<sequence length="548" mass="59876">MSHILRAAVLAAMLLPLPSMADQAGKSPNAVRYHGGDEIILQGFHWNVVREAPNDWYNILRQQAATIAADGFSAIWMPVPWRDFSSWSDGSKSGGGEGYFWHDFNKNGRYGSDAQLRQAASALGGAGVKVLYDVVPNHMNRGYPDKEINLPAGQGFWRNDCADPGNYPNDCDDGDRFIGGDADLNTGHPQVYGMFRDEFTNLRSQYGAGGFRFDFVRGYAPERVNSWMTDSADNSFCVGELWKGPSEYPNWDWRNTASWQQIIKDWSDRAKCPVFDFALKERMQNGSIADWKHGLNGNPDPRWREVAVTFVDNHDTGYSPGQNGGQHHWALQDGLIRQAYAYILTSPGTPVVYWSHMYDWGYGDFIRQLIQVRRAAGVRADSAISFHSGYSGLVATVSGSQQTLVVALNSDLGNPGQVASGSFSEAVNASNGQVRVWRSGTGSGGGEPGALVSVSFRCDNGATQMGDSVYAVGNVSQLGNWSPAAALRLTDTSGYPTWKGSIALPAGQNEEWKCLIRNEANATQVRQWQGGANNSLTPSEGATTVGRL</sequence>
<proteinExistence type="evidence at protein level"/>
<feature type="signal peptide">
    <location>
        <begin position="1"/>
        <end position="21"/>
    </location>
</feature>
<feature type="chain" id="PRO_0000001420" description="Glucan 1,4-alpha-maltotetraohydrolase">
    <location>
        <begin position="22"/>
        <end position="548"/>
    </location>
</feature>
<feature type="domain" description="CBM20" evidence="2">
    <location>
        <begin position="446"/>
        <end position="548"/>
    </location>
</feature>
<feature type="region of interest" description="Disordered" evidence="3">
    <location>
        <begin position="529"/>
        <end position="548"/>
    </location>
</feature>
<feature type="compositionally biased region" description="Polar residues" evidence="3">
    <location>
        <begin position="529"/>
        <end position="542"/>
    </location>
</feature>
<feature type="active site" description="Nucleophile" evidence="9">
    <location>
        <position position="214"/>
    </location>
</feature>
<feature type="active site" description="Proton donor" evidence="9 11">
    <location>
        <position position="240"/>
    </location>
</feature>
<feature type="binding site" evidence="4 6 7">
    <location>
        <position position="22"/>
    </location>
    <ligand>
        <name>Ca(2+)</name>
        <dbReference type="ChEBI" id="CHEBI:29108"/>
        <label>1</label>
    </ligand>
</feature>
<feature type="binding site" evidence="4 6 7">
    <location>
        <position position="23"/>
    </location>
    <ligand>
        <name>Ca(2+)</name>
        <dbReference type="ChEBI" id="CHEBI:29108"/>
        <label>1</label>
    </ligand>
</feature>
<feature type="binding site" evidence="4 6 7">
    <location>
        <position position="34"/>
    </location>
    <ligand>
        <name>Ca(2+)</name>
        <dbReference type="ChEBI" id="CHEBI:29108"/>
        <label>1</label>
    </ligand>
</feature>
<feature type="binding site" evidence="4 6 7">
    <location>
        <position position="37"/>
    </location>
    <ligand>
        <name>Ca(2+)</name>
        <dbReference type="ChEBI" id="CHEBI:29108"/>
        <label>1</label>
    </ligand>
</feature>
<feature type="binding site" evidence="4 6 7">
    <location>
        <position position="38"/>
    </location>
    <ligand>
        <name>Ca(2+)</name>
        <dbReference type="ChEBI" id="CHEBI:29108"/>
        <label>1</label>
    </ligand>
</feature>
<feature type="binding site" evidence="9">
    <location>
        <begin position="99"/>
        <end position="100"/>
    </location>
    <ligand>
        <name>substrate</name>
    </ligand>
</feature>
<feature type="binding site" evidence="4 6 7">
    <location>
        <position position="137"/>
    </location>
    <ligand>
        <name>Ca(2+)</name>
        <dbReference type="ChEBI" id="CHEBI:29108"/>
        <label>2</label>
    </ligand>
</feature>
<feature type="binding site" evidence="9 11">
    <location>
        <position position="138"/>
    </location>
    <ligand>
        <name>substrate</name>
    </ligand>
</feature>
<feature type="binding site" evidence="4 6 7">
    <location>
        <position position="172"/>
    </location>
    <ligand>
        <name>Ca(2+)</name>
        <dbReference type="ChEBI" id="CHEBI:29108"/>
        <label>2</label>
    </ligand>
</feature>
<feature type="binding site" evidence="4 6 7">
    <location>
        <position position="175"/>
    </location>
    <ligand>
        <name>Ca(2+)</name>
        <dbReference type="ChEBI" id="CHEBI:29108"/>
        <label>2</label>
    </ligand>
</feature>
<feature type="binding site" evidence="9">
    <location>
        <begin position="177"/>
        <end position="181"/>
    </location>
    <ligand>
        <name>substrate</name>
    </ligand>
</feature>
<feature type="binding site" evidence="4 6 7">
    <location>
        <position position="183"/>
    </location>
    <ligand>
        <name>Ca(2+)</name>
        <dbReference type="ChEBI" id="CHEBI:29108"/>
        <label>2</label>
    </ligand>
</feature>
<feature type="binding site" evidence="9 11">
    <location>
        <position position="212"/>
    </location>
    <ligand>
        <name>substrate</name>
    </ligand>
</feature>
<feature type="binding site" evidence="1">
    <location>
        <begin position="217"/>
        <end position="218"/>
    </location>
    <ligand>
        <name>substrate</name>
    </ligand>
</feature>
<feature type="binding site" evidence="4 6 7">
    <location>
        <position position="218"/>
    </location>
    <ligand>
        <name>Ca(2+)</name>
        <dbReference type="ChEBI" id="CHEBI:29108"/>
        <label>2</label>
    </ligand>
</feature>
<feature type="binding site" evidence="9 11">
    <location>
        <position position="314"/>
    </location>
    <ligand>
        <name>substrate</name>
    </ligand>
</feature>
<feature type="binding site" evidence="9">
    <location>
        <position position="326"/>
    </location>
    <ligand>
        <name>substrate</name>
    </ligand>
</feature>
<feature type="site" description="Transition state stabilizer" evidence="9">
    <location>
        <position position="315"/>
    </location>
</feature>
<feature type="disulfide bond" evidence="4 6 7">
    <location>
        <begin position="161"/>
        <end position="171"/>
    </location>
</feature>
<feature type="disulfide bond" evidence="4 6 7">
    <location>
        <begin position="237"/>
        <end position="272"/>
    </location>
</feature>
<feature type="mutagenesis site" description="Abolishes enzyme activity." evidence="4">
    <original>D</original>
    <variation>N</variation>
    <location>
        <position position="214"/>
    </location>
</feature>
<feature type="mutagenesis site" description="Abolishes enzyme activity." evidence="4 7">
    <original>E</original>
    <variation>Q</variation>
    <location>
        <position position="240"/>
    </location>
</feature>
<feature type="mutagenesis site" description="Abolishes enzyme activity." evidence="4">
    <original>D</original>
    <variation>N</variation>
    <location>
        <position position="315"/>
    </location>
</feature>
<feature type="sequence conflict" description="In Ref. 1; AA sequence." evidence="8" ref="1">
    <original>GSIADWKHGLNGNPDPR</original>
    <variation>ARSPTGSTPERQSRPA</variation>
    <location>
        <begin position="286"/>
        <end position="302"/>
    </location>
</feature>
<feature type="helix" evidence="12">
    <location>
        <begin position="34"/>
        <end position="36"/>
    </location>
</feature>
<feature type="strand" evidence="12">
    <location>
        <begin position="40"/>
        <end position="42"/>
    </location>
</feature>
<feature type="helix" evidence="12">
    <location>
        <begin position="48"/>
        <end position="51"/>
    </location>
</feature>
<feature type="turn" evidence="12">
    <location>
        <begin position="53"/>
        <end position="55"/>
    </location>
</feature>
<feature type="helix" evidence="12">
    <location>
        <begin position="56"/>
        <end position="69"/>
    </location>
</feature>
<feature type="strand" evidence="12">
    <location>
        <begin position="73"/>
        <end position="77"/>
    </location>
</feature>
<feature type="strand" evidence="13">
    <location>
        <begin position="87"/>
        <end position="89"/>
    </location>
</feature>
<feature type="strand" evidence="13">
    <location>
        <begin position="92"/>
        <end position="94"/>
    </location>
</feature>
<feature type="strand" evidence="12">
    <location>
        <begin position="102"/>
        <end position="104"/>
    </location>
</feature>
<feature type="strand" evidence="12">
    <location>
        <begin position="108"/>
        <end position="110"/>
    </location>
</feature>
<feature type="helix" evidence="12">
    <location>
        <begin position="113"/>
        <end position="125"/>
    </location>
</feature>
<feature type="strand" evidence="12">
    <location>
        <begin position="129"/>
        <end position="134"/>
    </location>
</feature>
<feature type="strand" evidence="12">
    <location>
        <begin position="152"/>
        <end position="155"/>
    </location>
</feature>
<feature type="helix" evidence="12">
    <location>
        <begin position="158"/>
        <end position="160"/>
    </location>
</feature>
<feature type="strand" evidence="12">
    <location>
        <begin position="165"/>
        <end position="167"/>
    </location>
</feature>
<feature type="strand" evidence="12">
    <location>
        <begin position="172"/>
        <end position="174"/>
    </location>
</feature>
<feature type="strand" evidence="14">
    <location>
        <begin position="180"/>
        <end position="184"/>
    </location>
</feature>
<feature type="helix" evidence="12">
    <location>
        <begin position="189"/>
        <end position="205"/>
    </location>
</feature>
<feature type="strand" evidence="12">
    <location>
        <begin position="208"/>
        <end position="214"/>
    </location>
</feature>
<feature type="helix" evidence="12">
    <location>
        <begin position="216"/>
        <end position="218"/>
    </location>
</feature>
<feature type="helix" evidence="12">
    <location>
        <begin position="221"/>
        <end position="231"/>
    </location>
</feature>
<feature type="strand" evidence="12">
    <location>
        <begin position="235"/>
        <end position="239"/>
    </location>
</feature>
<feature type="helix" evidence="12">
    <location>
        <begin position="245"/>
        <end position="247"/>
    </location>
</feature>
<feature type="helix" evidence="12">
    <location>
        <begin position="253"/>
        <end position="256"/>
    </location>
</feature>
<feature type="helix" evidence="12">
    <location>
        <begin position="259"/>
        <end position="270"/>
    </location>
</feature>
<feature type="helix" evidence="12">
    <location>
        <begin position="277"/>
        <end position="285"/>
    </location>
</feature>
<feature type="helix" evidence="12">
    <location>
        <begin position="288"/>
        <end position="293"/>
    </location>
</feature>
<feature type="helix" evidence="12">
    <location>
        <begin position="295"/>
        <end position="297"/>
    </location>
</feature>
<feature type="helix" evidence="12">
    <location>
        <begin position="301"/>
        <end position="304"/>
    </location>
</feature>
<feature type="strand" evidence="12">
    <location>
        <begin position="307"/>
        <end position="309"/>
    </location>
</feature>
<feature type="turn" evidence="12">
    <location>
        <begin position="314"/>
        <end position="316"/>
    </location>
</feature>
<feature type="helix" evidence="12">
    <location>
        <begin position="322"/>
        <end position="324"/>
    </location>
</feature>
<feature type="helix" evidence="12">
    <location>
        <begin position="333"/>
        <end position="335"/>
    </location>
</feature>
<feature type="helix" evidence="12">
    <location>
        <begin position="336"/>
        <end position="345"/>
    </location>
</feature>
<feature type="strand" evidence="12">
    <location>
        <begin position="346"/>
        <end position="353"/>
    </location>
</feature>
<feature type="helix" evidence="12">
    <location>
        <begin position="354"/>
        <end position="358"/>
    </location>
</feature>
<feature type="helix" evidence="12">
    <location>
        <begin position="363"/>
        <end position="376"/>
    </location>
</feature>
<feature type="strand" evidence="12">
    <location>
        <begin position="383"/>
        <end position="386"/>
    </location>
</feature>
<feature type="strand" evidence="12">
    <location>
        <begin position="390"/>
        <end position="398"/>
    </location>
</feature>
<feature type="strand" evidence="12">
    <location>
        <begin position="403"/>
        <end position="409"/>
    </location>
</feature>
<feature type="helix" evidence="12">
    <location>
        <begin position="415"/>
        <end position="417"/>
    </location>
</feature>
<feature type="strand" evidence="12">
    <location>
        <begin position="424"/>
        <end position="429"/>
    </location>
</feature>
<feature type="turn" evidence="12">
    <location>
        <begin position="430"/>
        <end position="433"/>
    </location>
</feature>
<feature type="strand" evidence="12">
    <location>
        <begin position="434"/>
        <end position="438"/>
    </location>
</feature>
<accession>P13507</accession>
<comment type="catalytic activity">
    <reaction evidence="4 5 7">
        <text>Hydrolysis of (1-&gt;4)-alpha-D-glucosidic linkages in amylaceous polysaccharides, to remove successive maltotetraose residues from the non-reducing chain ends.</text>
        <dbReference type="EC" id="3.2.1.60"/>
    </reaction>
</comment>
<comment type="cofactor">
    <cofactor evidence="4 6 7">
        <name>Ca(2+)</name>
        <dbReference type="ChEBI" id="CHEBI:29108"/>
    </cofactor>
    <text evidence="4 6 7">Binds 2 calcium ions per subunit.</text>
</comment>
<comment type="pathway">
    <text evidence="9 11">Glycan degradation; starch degradation.</text>
</comment>
<comment type="subunit">
    <text evidence="7">Monomer.</text>
</comment>
<comment type="subcellular location">
    <subcellularLocation>
        <location evidence="10">Secreted</location>
    </subcellularLocation>
</comment>
<comment type="miscellaneous">
    <text>There are several isoenzyme forms of this protein.</text>
</comment>
<comment type="similarity">
    <text evidence="8">Belongs to the glycosyl hydrolase 13 family.</text>
</comment>
<dbReference type="EC" id="3.2.1.60" evidence="4 5 7"/>
<dbReference type="EMBL" id="M24516">
    <property type="protein sequence ID" value="AAA25707.1"/>
    <property type="molecule type" value="Genomic_DNA"/>
</dbReference>
<dbReference type="PIR" id="A32803">
    <property type="entry name" value="A32803"/>
</dbReference>
<dbReference type="PDB" id="1GCY">
    <property type="method" value="X-ray"/>
    <property type="resolution" value="1.60 A"/>
    <property type="chains" value="A=22-548"/>
</dbReference>
<dbReference type="PDB" id="1JDA">
    <property type="method" value="X-ray"/>
    <property type="resolution" value="2.20 A"/>
    <property type="chains" value="A=22-450"/>
</dbReference>
<dbReference type="PDB" id="1JDC">
    <property type="method" value="X-ray"/>
    <property type="resolution" value="1.90 A"/>
    <property type="chains" value="A=22-450"/>
</dbReference>
<dbReference type="PDB" id="1JDD">
    <property type="method" value="X-ray"/>
    <property type="resolution" value="1.90 A"/>
    <property type="chains" value="A=22-450"/>
</dbReference>
<dbReference type="PDB" id="1QI3">
    <property type="method" value="X-ray"/>
    <property type="resolution" value="2.00 A"/>
    <property type="chains" value="A=22-450"/>
</dbReference>
<dbReference type="PDB" id="1QI4">
    <property type="method" value="X-ray"/>
    <property type="resolution" value="2.00 A"/>
    <property type="chains" value="A=22-450"/>
</dbReference>
<dbReference type="PDB" id="1QI5">
    <property type="method" value="X-ray"/>
    <property type="resolution" value="2.00 A"/>
    <property type="chains" value="A=22-450"/>
</dbReference>
<dbReference type="PDB" id="1QPK">
    <property type="method" value="X-ray"/>
    <property type="resolution" value="2.00 A"/>
    <property type="chains" value="A=22-439"/>
</dbReference>
<dbReference type="PDB" id="2AMG">
    <property type="method" value="X-ray"/>
    <property type="resolution" value="2.00 A"/>
    <property type="chains" value="A=22-439"/>
</dbReference>
<dbReference type="PDBsum" id="1GCY"/>
<dbReference type="PDBsum" id="1JDA"/>
<dbReference type="PDBsum" id="1JDC"/>
<dbReference type="PDBsum" id="1JDD"/>
<dbReference type="PDBsum" id="1QI3"/>
<dbReference type="PDBsum" id="1QI4"/>
<dbReference type="PDBsum" id="1QI5"/>
<dbReference type="PDBsum" id="1QPK"/>
<dbReference type="PDBsum" id="2AMG"/>
<dbReference type="SMR" id="P13507"/>
<dbReference type="DrugBank" id="DB02379">
    <property type="generic name" value="Beta-D-Glucose"/>
</dbReference>
<dbReference type="DrugBank" id="DB02237">
    <property type="generic name" value="Maltotetraose"/>
</dbReference>
<dbReference type="CAZy" id="CBM20">
    <property type="family name" value="Carbohydrate-Binding Module Family 20"/>
</dbReference>
<dbReference type="CAZy" id="GH13">
    <property type="family name" value="Glycoside Hydrolase Family 13"/>
</dbReference>
<dbReference type="UniPathway" id="UPA00153"/>
<dbReference type="EvolutionaryTrace" id="P13507"/>
<dbReference type="GO" id="GO:0005576">
    <property type="term" value="C:extracellular region"/>
    <property type="evidence" value="ECO:0007669"/>
    <property type="project" value="UniProtKB-SubCell"/>
</dbReference>
<dbReference type="GO" id="GO:0004556">
    <property type="term" value="F:alpha-amylase activity"/>
    <property type="evidence" value="ECO:0007669"/>
    <property type="project" value="InterPro"/>
</dbReference>
<dbReference type="GO" id="GO:0033910">
    <property type="term" value="F:glucan 1,4-alpha-maltotetraohydrolase activity"/>
    <property type="evidence" value="ECO:0007669"/>
    <property type="project" value="UniProtKB-EC"/>
</dbReference>
<dbReference type="GO" id="GO:0046872">
    <property type="term" value="F:metal ion binding"/>
    <property type="evidence" value="ECO:0007669"/>
    <property type="project" value="UniProtKB-KW"/>
</dbReference>
<dbReference type="GO" id="GO:2001070">
    <property type="term" value="F:starch binding"/>
    <property type="evidence" value="ECO:0007669"/>
    <property type="project" value="InterPro"/>
</dbReference>
<dbReference type="GO" id="GO:0005983">
    <property type="term" value="P:starch catabolic process"/>
    <property type="evidence" value="ECO:0007669"/>
    <property type="project" value="UniProtKB-UniPathway"/>
</dbReference>
<dbReference type="CDD" id="cd11314">
    <property type="entry name" value="AmyAc_arch_bac_plant_AmyA"/>
    <property type="match status" value="1"/>
</dbReference>
<dbReference type="CDD" id="cd05810">
    <property type="entry name" value="CBM20_alpha_MTH"/>
    <property type="match status" value="1"/>
</dbReference>
<dbReference type="Gene3D" id="3.20.20.80">
    <property type="entry name" value="Glycosidases"/>
    <property type="match status" value="1"/>
</dbReference>
<dbReference type="Gene3D" id="2.60.40.1180">
    <property type="entry name" value="Golgi alpha-mannosidase II"/>
    <property type="match status" value="1"/>
</dbReference>
<dbReference type="Gene3D" id="2.60.40.10">
    <property type="entry name" value="Immunoglobulins"/>
    <property type="match status" value="1"/>
</dbReference>
<dbReference type="InterPro" id="IPR006046">
    <property type="entry name" value="Alpha_amylase"/>
</dbReference>
<dbReference type="InterPro" id="IPR015165">
    <property type="entry name" value="AMT4_domain_C"/>
</dbReference>
<dbReference type="InterPro" id="IPR013784">
    <property type="entry name" value="Carb-bd-like_fold"/>
</dbReference>
<dbReference type="InterPro" id="IPR002044">
    <property type="entry name" value="CBM20"/>
</dbReference>
<dbReference type="InterPro" id="IPR006047">
    <property type="entry name" value="Glyco_hydro_13_cat_dom"/>
</dbReference>
<dbReference type="InterPro" id="IPR013780">
    <property type="entry name" value="Glyco_hydro_b"/>
</dbReference>
<dbReference type="InterPro" id="IPR017853">
    <property type="entry name" value="Glycoside_hydrolase_SF"/>
</dbReference>
<dbReference type="InterPro" id="IPR013783">
    <property type="entry name" value="Ig-like_fold"/>
</dbReference>
<dbReference type="PANTHER" id="PTHR43447">
    <property type="entry name" value="ALPHA-AMYLASE"/>
    <property type="match status" value="1"/>
</dbReference>
<dbReference type="Pfam" id="PF09081">
    <property type="entry name" value="AMT4_dom_C"/>
    <property type="match status" value="1"/>
</dbReference>
<dbReference type="Pfam" id="PF00686">
    <property type="entry name" value="CBM_20"/>
    <property type="match status" value="1"/>
</dbReference>
<dbReference type="PRINTS" id="PR00110">
    <property type="entry name" value="ALPHAAMYLASE"/>
</dbReference>
<dbReference type="SMART" id="SM00642">
    <property type="entry name" value="Aamy"/>
    <property type="match status" value="1"/>
</dbReference>
<dbReference type="SMART" id="SM01065">
    <property type="entry name" value="CBM_2"/>
    <property type="match status" value="1"/>
</dbReference>
<dbReference type="SUPFAM" id="SSF51445">
    <property type="entry name" value="(Trans)glycosidases"/>
    <property type="match status" value="1"/>
</dbReference>
<dbReference type="SUPFAM" id="SSF51011">
    <property type="entry name" value="Glycosyl hydrolase domain"/>
    <property type="match status" value="1"/>
</dbReference>
<dbReference type="SUPFAM" id="SSF49452">
    <property type="entry name" value="Starch-binding domain-like"/>
    <property type="match status" value="1"/>
</dbReference>
<dbReference type="PROSITE" id="PS51166">
    <property type="entry name" value="CBM20"/>
    <property type="match status" value="1"/>
</dbReference>
<organism>
    <name type="scientific">Stutzerimonas stutzeri</name>
    <name type="common">Pseudomonas stutzeri</name>
    <dbReference type="NCBI Taxonomy" id="316"/>
    <lineage>
        <taxon>Bacteria</taxon>
        <taxon>Pseudomonadati</taxon>
        <taxon>Pseudomonadota</taxon>
        <taxon>Gammaproteobacteria</taxon>
        <taxon>Pseudomonadales</taxon>
        <taxon>Pseudomonadaceae</taxon>
        <taxon>Stutzerimonas</taxon>
    </lineage>
</organism>
<reference key="1">
    <citation type="journal article" date="1989" name="J. Bacteriol.">
        <title>Cloning and nucleotide sequence of the gene (amyP) for maltotetraose-forming amylase from Pseudomonas stutzeri MO-19.</title>
        <authorList>
            <person name="Fujita M."/>
            <person name="Torigoe K."/>
            <person name="Nakada T."/>
            <person name="Tsusaki K."/>
            <person name="Kubota M."/>
            <person name="Sakai S."/>
            <person name="Tsujisaka Y."/>
        </authorList>
    </citation>
    <scope>NUCLEOTIDE SEQUENCE [GENOMIC DNA]</scope>
    <scope>PARTIAL PROTEIN SEQUENCE</scope>
    <scope>CATALYTIC ACTIVITY</scope>
    <source>
        <strain>MO-19</strain>
    </source>
</reference>
<reference key="2">
    <citation type="journal article" date="1997" name="J. Mol. Biol.">
        <title>Crystal structure of a maltotetraose-forming exo-amylase from Pseudomonas stutzeri.</title>
        <authorList>
            <person name="Morishita Y."/>
            <person name="Hasegawa K."/>
            <person name="Matsuura Y."/>
            <person name="Katsube Y."/>
            <person name="Kubota M."/>
            <person name="Sakai S."/>
        </authorList>
    </citation>
    <scope>X-RAY CRYSTALLOGRAPHY (2.00 ANGSTROMS) OF 22-439 IN COMPLEX WITH CALCIUM</scope>
    <scope>SEQUENCE REVISION TO 286-302</scope>
    <scope>DISULFIDE BONDS</scope>
    <scope>COFACTOR</scope>
    <source>
        <strain>MO-19</strain>
    </source>
</reference>
<reference key="3">
    <citation type="journal article" date="1997" name="J. Mol. Biol.">
        <title>Crystal structures of a mutant maltotetraose-forming exo-amylase cocrystallized with maltopentaose.</title>
        <authorList>
            <person name="Yoshioka Y."/>
            <person name="Hasegawa K."/>
            <person name="Matsuura Y."/>
            <person name="Katsube Y."/>
            <person name="Kubota M."/>
        </authorList>
    </citation>
    <scope>X-RAY CRYSTALLOGRAPHY (1.9 ANGSTROMS) OF MUTANT GLN-240 IN COMPLEX WITH MALTOPENTAOSE AND CALCIUM IONS</scope>
    <scope>DISULFIDE BONDS</scope>
    <scope>MUTAGENESIS OF GLU-240</scope>
    <scope>CATALYTIC ACTIVITY</scope>
    <scope>COFACTOR</scope>
    <source>
        <strain>MO-19</strain>
    </source>
</reference>
<reference key="4">
    <citation type="journal article" date="1999" name="Protein Eng.">
        <title>Roles of catalytic residues in alpha-amylases as evidenced by the structures of the product-complexed mutants of a maltotetraose-forming amylase.</title>
        <authorList>
            <person name="Hasegawa K."/>
            <person name="Kubota M."/>
            <person name="Matsuura Y."/>
        </authorList>
    </citation>
    <scope>X-RAY CRYSTALLOGRAPHY (2.00 ANGSTROMS) OF 22-450 IN COMPLEX WITH CALCIUM AND MALTOTETRAOSE</scope>
    <scope>DISULFIDE BONDS</scope>
    <scope>ACTIVE SITE</scope>
    <scope>MUTAGENESIS OF ASP-214; GLU-240 AND ASP-315</scope>
    <scope>CATALYTIC ACTIVITY</scope>
    <scope>COFACTOR</scope>
    <source>
        <strain>MO-19</strain>
    </source>
</reference>
<name>AMT4_STUST</name>
<gene>
    <name type="primary">amyP</name>
</gene>
<keyword id="KW-0002">3D-structure</keyword>
<keyword id="KW-0106">Calcium</keyword>
<keyword id="KW-0119">Carbohydrate metabolism</keyword>
<keyword id="KW-0903">Direct protein sequencing</keyword>
<keyword id="KW-1015">Disulfide bond</keyword>
<keyword id="KW-0326">Glycosidase</keyword>
<keyword id="KW-0378">Hydrolase</keyword>
<keyword id="KW-0479">Metal-binding</keyword>
<keyword id="KW-0964">Secreted</keyword>
<keyword id="KW-0732">Signal</keyword>
<evidence type="ECO:0000250" key="1">
    <source>
        <dbReference type="UniProtKB" id="P0C1B3"/>
    </source>
</evidence>
<evidence type="ECO:0000255" key="2">
    <source>
        <dbReference type="PROSITE-ProRule" id="PRU00594"/>
    </source>
</evidence>
<evidence type="ECO:0000256" key="3">
    <source>
        <dbReference type="SAM" id="MobiDB-lite"/>
    </source>
</evidence>
<evidence type="ECO:0000269" key="4">
    <source>
    </source>
</evidence>
<evidence type="ECO:0000269" key="5">
    <source>
    </source>
</evidence>
<evidence type="ECO:0000269" key="6">
    <source>
    </source>
</evidence>
<evidence type="ECO:0000269" key="7">
    <source>
    </source>
</evidence>
<evidence type="ECO:0000305" key="8"/>
<evidence type="ECO:0000305" key="9">
    <source>
    </source>
</evidence>
<evidence type="ECO:0000305" key="10">
    <source>
    </source>
</evidence>
<evidence type="ECO:0000305" key="11">
    <source>
    </source>
</evidence>
<evidence type="ECO:0007829" key="12">
    <source>
        <dbReference type="PDB" id="1GCY"/>
    </source>
</evidence>
<evidence type="ECO:0007829" key="13">
    <source>
        <dbReference type="PDB" id="1JDC"/>
    </source>
</evidence>
<evidence type="ECO:0007829" key="14">
    <source>
        <dbReference type="PDB" id="1QI5"/>
    </source>
</evidence>